<feature type="chain" id="PRO_0000448582" description="Protection of telomeres homolog 1">
    <location>
        <begin position="1"/>
        <end position="400"/>
    </location>
</feature>
<feature type="splice variant" id="VSP_060412" description="In isoform b." evidence="6">
    <location>
        <begin position="1"/>
        <end position="247"/>
    </location>
</feature>
<feature type="splice variant" id="VSP_060413" description="In isoform c." evidence="6">
    <location>
        <begin position="40"/>
        <end position="60"/>
    </location>
</feature>
<protein>
    <recommendedName>
        <fullName>Protection of telomeres homolog 1</fullName>
    </recommendedName>
</protein>
<comment type="function">
    <text evidence="1 2 3 4">Telomeric DNA-binding protein, which binds to single-stranded C-rich repeat sequences, with high specificity to the 5'-GCCTAA-3' sequence (PubMed:18329362, PubMed:23390606). Repeat sequence binding can be at the 5' or 3' telomeric end (PubMed:18329362). May have a role in protecting the 5' end of the C-rich strand of the telomere (PubMed:23390606). Acts redundantly with pot-2 to negatively regulate telomerase-mediated telomere extension (PubMed:18329362, PubMed:23390606, PubMed:24297748). Also regulates telomere length by the telomerase-independent telomere maintenance pathway called ALT (alternative lengthening of telomeres) (PubMed:22547822, PubMed:23390606, PubMed:24297748). Through sun-1, anchors telomeres to the nuclear envelope in embryos (PubMed:24297748).</text>
</comment>
<comment type="subcellular location">
    <subcellularLocation>
        <location evidence="3 4 7">Nucleus</location>
    </subcellularLocation>
    <subcellularLocation>
        <location evidence="4">Nucleus envelope</location>
    </subcellularLocation>
    <subcellularLocation>
        <location evidence="3 7">Chromosome</location>
        <location evidence="3 7">Telomere</location>
    </subcellularLocation>
    <text evidence="3">More highly expressed in meiotic pachytene nuclei than in diakinesis-stage oocyte nuclei (PubMed:23390606). Also expressed in mitotic nuclei (PubMed:23390606).</text>
</comment>
<comment type="alternative products">
    <event type="alternative splicing"/>
    <isoform>
        <id>P42001-1</id>
        <name evidence="8">a</name>
        <sequence type="displayed"/>
    </isoform>
    <isoform>
        <id>P42001-2</id>
        <name evidence="9">b</name>
        <sequence type="described" ref="VSP_060412"/>
    </isoform>
    <isoform>
        <id>P42001-3</id>
        <name evidence="10">c</name>
        <sequence type="described" ref="VSP_060413"/>
    </isoform>
</comment>
<comment type="tissue specificity">
    <text evidence="3">Expressed in sperm and oocytes.</text>
</comment>
<comment type="developmental stage">
    <text evidence="4">Expressed in embryos.</text>
</comment>
<comment type="similarity">
    <text evidence="6">Belongs to the telombin family.</text>
</comment>
<name>POT1_CAEEL</name>
<dbReference type="EMBL" id="BX284603">
    <property type="protein sequence ID" value="SPC47519.1"/>
    <property type="molecule type" value="Genomic_DNA"/>
</dbReference>
<dbReference type="EMBL" id="BX284603">
    <property type="protein sequence ID" value="SPC47520.1"/>
    <property type="molecule type" value="Genomic_DNA"/>
</dbReference>
<dbReference type="EMBL" id="BX284603">
    <property type="protein sequence ID" value="SPC47521.1"/>
    <property type="molecule type" value="Genomic_DNA"/>
</dbReference>
<dbReference type="PIR" id="T15304">
    <property type="entry name" value="T15304"/>
</dbReference>
<dbReference type="RefSeq" id="NP_001348724.1">
    <molecule id="P42001-1"/>
    <property type="nucleotide sequence ID" value="NM_001361731.2"/>
</dbReference>
<dbReference type="RefSeq" id="NP_001348725.1">
    <molecule id="P42001-2"/>
    <property type="nucleotide sequence ID" value="NM_001361732.2"/>
</dbReference>
<dbReference type="RefSeq" id="NP_001348726.1">
    <molecule id="P42001-3"/>
    <property type="nucleotide sequence ID" value="NM_001361730.1"/>
</dbReference>
<dbReference type="SMR" id="P42001"/>
<dbReference type="BioGRID" id="46760">
    <property type="interactions" value="1"/>
</dbReference>
<dbReference type="FunCoup" id="P42001">
    <property type="interactions" value="324"/>
</dbReference>
<dbReference type="STRING" id="6239.B0280.10a.1"/>
<dbReference type="PaxDb" id="6239-B0280.10"/>
<dbReference type="PeptideAtlas" id="P42001"/>
<dbReference type="EnsemblMetazoa" id="B0280.10a.1">
    <molecule id="P42001-1"/>
    <property type="protein sequence ID" value="B0280.10a.1"/>
    <property type="gene ID" value="WBGene00015105"/>
</dbReference>
<dbReference type="EnsemblMetazoa" id="B0280.10b.1">
    <molecule id="P42001-2"/>
    <property type="protein sequence ID" value="B0280.10b.1"/>
    <property type="gene ID" value="WBGene00015105"/>
</dbReference>
<dbReference type="EnsemblMetazoa" id="B0280.10b.2">
    <molecule id="P42001-2"/>
    <property type="protein sequence ID" value="B0280.10b.2"/>
    <property type="gene ID" value="WBGene00015105"/>
</dbReference>
<dbReference type="EnsemblMetazoa" id="B0280.10b.3">
    <molecule id="P42001-2"/>
    <property type="protein sequence ID" value="B0280.10b.3"/>
    <property type="gene ID" value="WBGene00015105"/>
</dbReference>
<dbReference type="EnsemblMetazoa" id="B0280.10c.1">
    <molecule id="P42001-3"/>
    <property type="protein sequence ID" value="B0280.10c.1"/>
    <property type="gene ID" value="WBGene00015105"/>
</dbReference>
<dbReference type="GeneID" id="181894"/>
<dbReference type="UCSC" id="B0280.10">
    <molecule id="P42001-1"/>
    <property type="organism name" value="c. elegans"/>
</dbReference>
<dbReference type="AGR" id="WB:WBGene00015105"/>
<dbReference type="WormBase" id="B0280.10a">
    <molecule id="P42001-1"/>
    <property type="protein sequence ID" value="CE52581"/>
    <property type="gene ID" value="WBGene00015105"/>
    <property type="gene designation" value="pot-1"/>
</dbReference>
<dbReference type="WormBase" id="B0280.10b">
    <molecule id="P42001-2"/>
    <property type="protein sequence ID" value="CE52643"/>
    <property type="gene ID" value="WBGene00015105"/>
    <property type="gene designation" value="pot-1"/>
</dbReference>
<dbReference type="WormBase" id="B0280.10c">
    <molecule id="P42001-3"/>
    <property type="protein sequence ID" value="CE52474"/>
    <property type="gene ID" value="WBGene00015105"/>
    <property type="gene designation" value="pot-1"/>
</dbReference>
<dbReference type="eggNOG" id="ENOG502TINA">
    <property type="taxonomic scope" value="Eukaryota"/>
</dbReference>
<dbReference type="HOGENOM" id="CLU_804703_0_0_1"/>
<dbReference type="InParanoid" id="P42001"/>
<dbReference type="OrthoDB" id="5874768at2759"/>
<dbReference type="PRO" id="PR:P42001"/>
<dbReference type="Proteomes" id="UP000001940">
    <property type="component" value="Chromosome III"/>
</dbReference>
<dbReference type="Bgee" id="WBGene00015105">
    <property type="expression patterns" value="Expressed in germ line (C elegans) and 4 other cell types or tissues"/>
</dbReference>
<dbReference type="GO" id="GO:0000781">
    <property type="term" value="C:chromosome, telomeric region"/>
    <property type="evidence" value="ECO:0000314"/>
    <property type="project" value="WormBase"/>
</dbReference>
<dbReference type="GO" id="GO:0005635">
    <property type="term" value="C:nuclear envelope"/>
    <property type="evidence" value="ECO:0007669"/>
    <property type="project" value="UniProtKB-SubCell"/>
</dbReference>
<dbReference type="GO" id="GO:0061730">
    <property type="term" value="F:C-rich strand telomeric DNA binding"/>
    <property type="evidence" value="ECO:0000314"/>
    <property type="project" value="WormBase"/>
</dbReference>
<dbReference type="GO" id="GO:0043047">
    <property type="term" value="F:single-stranded telomeric DNA binding"/>
    <property type="evidence" value="ECO:0000250"/>
    <property type="project" value="WormBase"/>
</dbReference>
<dbReference type="GO" id="GO:1904357">
    <property type="term" value="P:negative regulation of telomere maintenance via telomere lengthening"/>
    <property type="evidence" value="ECO:0000315"/>
    <property type="project" value="WormBase"/>
</dbReference>
<dbReference type="GO" id="GO:0000723">
    <property type="term" value="P:telomere maintenance"/>
    <property type="evidence" value="ECO:0000315"/>
    <property type="project" value="WormBase"/>
</dbReference>
<accession>P42001</accession>
<accession>A0A2K5ATS5</accession>
<accession>A0A2K5ATS9</accession>
<accession>A0A2K5ATU9</accession>
<reference key="1">
    <citation type="journal article" date="1998" name="Science">
        <title>Genome sequence of the nematode C. elegans: a platform for investigating biology.</title>
        <authorList>
            <consortium name="The C. elegans sequencing consortium"/>
        </authorList>
    </citation>
    <scope>NUCLEOTIDE SEQUENCE [LARGE SCALE GENOMIC DNA]</scope>
    <source>
        <strain>Bristol N2</strain>
    </source>
</reference>
<reference key="2">
    <citation type="journal article" date="2008" name="Cell">
        <title>C. elegans telomeres contain G-strand and C-strand overhangs that are bound by distinct proteins.</title>
        <authorList>
            <person name="Raices M."/>
            <person name="Verdun R.E."/>
            <person name="Compton S.A."/>
            <person name="Haggblom C.I."/>
            <person name="Griffith J.D."/>
            <person name="Dillin A."/>
            <person name="Karlseder J."/>
        </authorList>
    </citation>
    <scope>FUNCTION</scope>
    <scope>SUBCELLULAR LOCATION</scope>
</reference>
<reference key="3">
    <citation type="journal article" date="2012" name="Proc. Natl. Acad. Sci. U.S.A.">
        <title>Caenorhabditis elegans POT-2 telomere protein represses a mode of alternative lengthening of telomeres with normal telomere lengths.</title>
        <authorList>
            <person name="Cheng C."/>
            <person name="Shtessel L."/>
            <person name="Brady M.M."/>
            <person name="Ahmed S."/>
        </authorList>
    </citation>
    <scope>FUNCTION</scope>
</reference>
<reference key="4">
    <citation type="journal article" date="2013" name="G3 (Bethesda)">
        <title>Caenorhabditis elegans POT-1 and POT-2 repress telomere maintenance pathways.</title>
        <authorList>
            <person name="Shtessel L."/>
            <person name="Lowden M.R."/>
            <person name="Cheng C."/>
            <person name="Simon M."/>
            <person name="Wang K."/>
            <person name="Ahmed S."/>
        </authorList>
    </citation>
    <scope>FUNCTION</scope>
    <scope>SUBCELLULAR LOCATION</scope>
    <scope>TISSUE SPECIFICITY</scope>
</reference>
<reference key="5">
    <citation type="journal article" date="2013" name="J. Cell Biol.">
        <title>The shelterin protein POT-1 anchors Caenorhabditis elegans telomeres through SUN-1 at the nuclear periphery.</title>
        <authorList>
            <person name="Ferreira H.C."/>
            <person name="Towbin B.D."/>
            <person name="Jegou T."/>
            <person name="Gasser S.M."/>
        </authorList>
    </citation>
    <scope>FUNCTION</scope>
    <scope>SUBCELLULAR LOCATION</scope>
    <scope>DEVELOPMENTAL STAGE</scope>
</reference>
<gene>
    <name evidence="8" type="primary">pot-1</name>
    <name evidence="5" type="synonym">CeOB2</name>
    <name evidence="8" type="ORF">B0280.10</name>
</gene>
<evidence type="ECO:0000269" key="1">
    <source>
    </source>
</evidence>
<evidence type="ECO:0000269" key="2">
    <source>
    </source>
</evidence>
<evidence type="ECO:0000269" key="3">
    <source>
    </source>
</evidence>
<evidence type="ECO:0000269" key="4">
    <source>
    </source>
</evidence>
<evidence type="ECO:0000303" key="5">
    <source>
    </source>
</evidence>
<evidence type="ECO:0000305" key="6"/>
<evidence type="ECO:0000305" key="7">
    <source>
    </source>
</evidence>
<evidence type="ECO:0000312" key="8">
    <source>
        <dbReference type="WormBase" id="B0280.10a"/>
    </source>
</evidence>
<evidence type="ECO:0000312" key="9">
    <source>
        <dbReference type="WormBase" id="B0280.10b"/>
    </source>
</evidence>
<evidence type="ECO:0000312" key="10">
    <source>
        <dbReference type="WormBase" id="B0280.10c"/>
    </source>
</evidence>
<keyword id="KW-0025">Alternative splicing</keyword>
<keyword id="KW-0158">Chromosome</keyword>
<keyword id="KW-0238">DNA-binding</keyword>
<keyword id="KW-0539">Nucleus</keyword>
<keyword id="KW-1185">Reference proteome</keyword>
<keyword id="KW-0779">Telomere</keyword>
<organism>
    <name type="scientific">Caenorhabditis elegans</name>
    <dbReference type="NCBI Taxonomy" id="6239"/>
    <lineage>
        <taxon>Eukaryota</taxon>
        <taxon>Metazoa</taxon>
        <taxon>Ecdysozoa</taxon>
        <taxon>Nematoda</taxon>
        <taxon>Chromadorea</taxon>
        <taxon>Rhabditida</taxon>
        <taxon>Rhabditina</taxon>
        <taxon>Rhabditomorpha</taxon>
        <taxon>Rhabditoidea</taxon>
        <taxon>Rhabditidae</taxon>
        <taxon>Peloderinae</taxon>
        <taxon>Caenorhabditis</taxon>
    </lineage>
</organism>
<sequence length="400" mass="46492">MQYTYQHIQDLVPGPTPQNFYGKIIFIKKKINQIVVLIKDETQSIYLRVIPKEDQELEFQLRQVVRVHRCKIQSILNSKEGIAQIGLFGCHLIAWSQSGKVDNPVIISSRSWTKSDEDSERLQTLRKLGKSRRKSGRKTSVDTMANKLIERREAMFADTFIKSLFNKIALSRKEHLSRNARELFYHRPGDIVETQNLLEIDDSWFNDENSEQFVQYVLNCTTCHVEYNHVEYAQNNIPTNCRFCQEAMESFHAAFRIRISIETYGVFLTIPLELIKTELDICEDWDSESNIVEEEEKVTRFKKNIQEKVRDASIVHIKGISSLLLIIMLNINSISLVNNITENKRILLQKSNVPSSLQLKILITPFVIVVVRFFGITWIYSGSSCIEEVLNLIDNCSRRR</sequence>
<proteinExistence type="evidence at transcript level"/>